<organism>
    <name type="scientific">Arabidopsis thaliana</name>
    <name type="common">Mouse-ear cress</name>
    <dbReference type="NCBI Taxonomy" id="3702"/>
    <lineage>
        <taxon>Eukaryota</taxon>
        <taxon>Viridiplantae</taxon>
        <taxon>Streptophyta</taxon>
        <taxon>Embryophyta</taxon>
        <taxon>Tracheophyta</taxon>
        <taxon>Spermatophyta</taxon>
        <taxon>Magnoliopsida</taxon>
        <taxon>eudicotyledons</taxon>
        <taxon>Gunneridae</taxon>
        <taxon>Pentapetalae</taxon>
        <taxon>rosids</taxon>
        <taxon>malvids</taxon>
        <taxon>Brassicales</taxon>
        <taxon>Brassicaceae</taxon>
        <taxon>Camelineae</taxon>
        <taxon>Arabidopsis</taxon>
    </lineage>
</organism>
<feature type="chain" id="PRO_0000283193" description="F-box/kelch-repeat protein At2g22030">
    <location>
        <begin position="1"/>
        <end position="383"/>
    </location>
</feature>
<feature type="domain" description="F-box">
    <location>
        <begin position="23"/>
        <end position="71"/>
    </location>
</feature>
<feature type="repeat" description="Kelch 1">
    <location>
        <begin position="130"/>
        <end position="175"/>
    </location>
</feature>
<feature type="repeat" description="Kelch 2">
    <location>
        <begin position="176"/>
        <end position="220"/>
    </location>
</feature>
<feature type="repeat" description="Kelch 3">
    <location>
        <begin position="269"/>
        <end position="317"/>
    </location>
</feature>
<keyword id="KW-0880">Kelch repeat</keyword>
<keyword id="KW-1185">Reference proteome</keyword>
<keyword id="KW-0677">Repeat</keyword>
<proteinExistence type="predicted"/>
<protein>
    <recommendedName>
        <fullName>F-box/kelch-repeat protein At2g22030</fullName>
    </recommendedName>
</protein>
<gene>
    <name type="ordered locus">At2g22030</name>
    <name type="ORF">T16B14.12</name>
</gene>
<name>FBK33_ARATH</name>
<sequence length="383" mass="43474">MRRAINLINRNPRPYDIAADQSSLLFSSLPYDVVLNCLARVSRRYYPNLSCVSKSFQSLVRSPELAHMRSLIGKDDPVVYVCFSDTKPFLGRRLDWFTLNPNEKKTSVLNSFQVFSYYMLYCPSVSIGSKIYFVGGCMYKCLPGLLIFDSWSGELCVGPSMKEARMLPGVAVVNGKLYVMGGCREDQIQVEVFDPNSQTWEVGPLSSDGEVRYGKGLMRYGAIVTEAVALEGKVYCMSYKDGSHIIYDTKDGKCETFLMADGKAWRRGGVCVVNSVIYVYYINLGVMWYDPKDKVWREVKGLNKLDYKSIDMVGMVDCNGKLGFLWGNNTREIISGRTEKRIWCEMIVLERSGVEIHGTVEWSDLVGFVPHDYEIWRCLGVSY</sequence>
<accession>Q9SI02</accession>
<dbReference type="EMBL" id="AC007019">
    <property type="protein sequence ID" value="AAM15347.1"/>
    <property type="molecule type" value="Genomic_DNA"/>
</dbReference>
<dbReference type="EMBL" id="AC007232">
    <property type="protein sequence ID" value="AAD25821.1"/>
    <property type="molecule type" value="Genomic_DNA"/>
</dbReference>
<dbReference type="EMBL" id="CP002685">
    <property type="protein sequence ID" value="AEC07253.1"/>
    <property type="molecule type" value="Genomic_DNA"/>
</dbReference>
<dbReference type="PIR" id="B84608">
    <property type="entry name" value="B84608"/>
</dbReference>
<dbReference type="RefSeq" id="NP_179794.1">
    <property type="nucleotide sequence ID" value="NM_127772.1"/>
</dbReference>
<dbReference type="SMR" id="Q9SI02"/>
<dbReference type="BioGRID" id="2091">
    <property type="interactions" value="2"/>
</dbReference>
<dbReference type="STRING" id="3702.Q9SI02"/>
<dbReference type="PaxDb" id="3702-AT2G22030.1"/>
<dbReference type="EnsemblPlants" id="AT2G22030.1">
    <property type="protein sequence ID" value="AT2G22030.1"/>
    <property type="gene ID" value="AT2G22030"/>
</dbReference>
<dbReference type="GeneID" id="816738"/>
<dbReference type="Gramene" id="AT2G22030.1">
    <property type="protein sequence ID" value="AT2G22030.1"/>
    <property type="gene ID" value="AT2G22030"/>
</dbReference>
<dbReference type="KEGG" id="ath:AT2G22030"/>
<dbReference type="Araport" id="AT2G22030"/>
<dbReference type="TAIR" id="AT2G22030"/>
<dbReference type="eggNOG" id="KOG1072">
    <property type="taxonomic scope" value="Eukaryota"/>
</dbReference>
<dbReference type="HOGENOM" id="CLU_032521_0_0_1"/>
<dbReference type="InParanoid" id="Q9SI02"/>
<dbReference type="OMA" id="MANEDTW"/>
<dbReference type="OrthoDB" id="45365at2759"/>
<dbReference type="PhylomeDB" id="Q9SI02"/>
<dbReference type="PRO" id="PR:Q9SI02"/>
<dbReference type="Proteomes" id="UP000006548">
    <property type="component" value="Chromosome 2"/>
</dbReference>
<dbReference type="ExpressionAtlas" id="Q9SI02">
    <property type="expression patterns" value="baseline and differential"/>
</dbReference>
<dbReference type="CDD" id="cd22152">
    <property type="entry name" value="F-box_AtAFR-like"/>
    <property type="match status" value="1"/>
</dbReference>
<dbReference type="Gene3D" id="2.120.10.80">
    <property type="entry name" value="Kelch-type beta propeller"/>
    <property type="match status" value="1"/>
</dbReference>
<dbReference type="InterPro" id="IPR036047">
    <property type="entry name" value="F-box-like_dom_sf"/>
</dbReference>
<dbReference type="InterPro" id="IPR050354">
    <property type="entry name" value="F-box/kelch-repeat_ARATH"/>
</dbReference>
<dbReference type="InterPro" id="IPR001810">
    <property type="entry name" value="F-box_dom"/>
</dbReference>
<dbReference type="InterPro" id="IPR015915">
    <property type="entry name" value="Kelch-typ_b-propeller"/>
</dbReference>
<dbReference type="InterPro" id="IPR006652">
    <property type="entry name" value="Kelch_1"/>
</dbReference>
<dbReference type="PANTHER" id="PTHR24414">
    <property type="entry name" value="F-BOX/KELCH-REPEAT PROTEIN SKIP4"/>
    <property type="match status" value="1"/>
</dbReference>
<dbReference type="PANTHER" id="PTHR24414:SF184">
    <property type="entry name" value="GALACTOSE OXIDASE_KELCH REPEAT SUPERFAMILY PROTEIN"/>
    <property type="match status" value="1"/>
</dbReference>
<dbReference type="Pfam" id="PF00646">
    <property type="entry name" value="F-box"/>
    <property type="match status" value="1"/>
</dbReference>
<dbReference type="Pfam" id="PF25210">
    <property type="entry name" value="Kelch_FKB95"/>
    <property type="match status" value="1"/>
</dbReference>
<dbReference type="SMART" id="SM00256">
    <property type="entry name" value="FBOX"/>
    <property type="match status" value="1"/>
</dbReference>
<dbReference type="SMART" id="SM00612">
    <property type="entry name" value="Kelch"/>
    <property type="match status" value="2"/>
</dbReference>
<dbReference type="SUPFAM" id="SSF81383">
    <property type="entry name" value="F-box domain"/>
    <property type="match status" value="1"/>
</dbReference>
<dbReference type="SUPFAM" id="SSF117281">
    <property type="entry name" value="Kelch motif"/>
    <property type="match status" value="1"/>
</dbReference>
<reference key="1">
    <citation type="journal article" date="1999" name="Nature">
        <title>Sequence and analysis of chromosome 2 of the plant Arabidopsis thaliana.</title>
        <authorList>
            <person name="Lin X."/>
            <person name="Kaul S."/>
            <person name="Rounsley S.D."/>
            <person name="Shea T.P."/>
            <person name="Benito M.-I."/>
            <person name="Town C.D."/>
            <person name="Fujii C.Y."/>
            <person name="Mason T.M."/>
            <person name="Bowman C.L."/>
            <person name="Barnstead M.E."/>
            <person name="Feldblyum T.V."/>
            <person name="Buell C.R."/>
            <person name="Ketchum K.A."/>
            <person name="Lee J.J."/>
            <person name="Ronning C.M."/>
            <person name="Koo H.L."/>
            <person name="Moffat K.S."/>
            <person name="Cronin L.A."/>
            <person name="Shen M."/>
            <person name="Pai G."/>
            <person name="Van Aken S."/>
            <person name="Umayam L."/>
            <person name="Tallon L.J."/>
            <person name="Gill J.E."/>
            <person name="Adams M.D."/>
            <person name="Carrera A.J."/>
            <person name="Creasy T.H."/>
            <person name="Goodman H.M."/>
            <person name="Somerville C.R."/>
            <person name="Copenhaver G.P."/>
            <person name="Preuss D."/>
            <person name="Nierman W.C."/>
            <person name="White O."/>
            <person name="Eisen J.A."/>
            <person name="Salzberg S.L."/>
            <person name="Fraser C.M."/>
            <person name="Venter J.C."/>
        </authorList>
    </citation>
    <scope>NUCLEOTIDE SEQUENCE [LARGE SCALE GENOMIC DNA]</scope>
    <source>
        <strain>cv. Columbia</strain>
    </source>
</reference>
<reference key="2">
    <citation type="journal article" date="2017" name="Plant J.">
        <title>Araport11: a complete reannotation of the Arabidopsis thaliana reference genome.</title>
        <authorList>
            <person name="Cheng C.Y."/>
            <person name="Krishnakumar V."/>
            <person name="Chan A.P."/>
            <person name="Thibaud-Nissen F."/>
            <person name="Schobel S."/>
            <person name="Town C.D."/>
        </authorList>
    </citation>
    <scope>GENOME REANNOTATION</scope>
    <source>
        <strain>cv. Columbia</strain>
    </source>
</reference>